<reference key="1">
    <citation type="journal article" date="2009" name="J. Bacteriol.">
        <title>Complete and draft genome sequences of six members of the Aquificales.</title>
        <authorList>
            <person name="Reysenbach A.-L."/>
            <person name="Hamamura N."/>
            <person name="Podar M."/>
            <person name="Griffiths E."/>
            <person name="Ferreira S."/>
            <person name="Hochstein R."/>
            <person name="Heidelberg J."/>
            <person name="Johnson J."/>
            <person name="Mead D."/>
            <person name="Pohorille A."/>
            <person name="Sarmiento M."/>
            <person name="Schweighofer K."/>
            <person name="Seshadri R."/>
            <person name="Voytek M.A."/>
        </authorList>
    </citation>
    <scope>NUCLEOTIDE SEQUENCE [LARGE SCALE GENOMIC DNA]</scope>
    <source>
        <strain>YO3AOP1</strain>
    </source>
</reference>
<comment type="function">
    <text evidence="1">Catalyzes the isomerization between 2-isopropylmalate and 3-isopropylmalate, via the formation of 2-isopropylmaleate.</text>
</comment>
<comment type="catalytic activity">
    <reaction evidence="1">
        <text>(2R,3S)-3-isopropylmalate = (2S)-2-isopropylmalate</text>
        <dbReference type="Rhea" id="RHEA:32287"/>
        <dbReference type="ChEBI" id="CHEBI:1178"/>
        <dbReference type="ChEBI" id="CHEBI:35121"/>
        <dbReference type="EC" id="4.2.1.33"/>
    </reaction>
</comment>
<comment type="cofactor">
    <cofactor evidence="1">
        <name>[4Fe-4S] cluster</name>
        <dbReference type="ChEBI" id="CHEBI:49883"/>
    </cofactor>
    <text evidence="1">Binds 1 [4Fe-4S] cluster per subunit.</text>
</comment>
<comment type="pathway">
    <text evidence="1">Amino-acid biosynthesis; L-leucine biosynthesis; L-leucine from 3-methyl-2-oxobutanoate: step 2/4.</text>
</comment>
<comment type="subunit">
    <text evidence="1">Heterodimer of LeuC and LeuD.</text>
</comment>
<comment type="similarity">
    <text evidence="1">Belongs to the aconitase/IPM isomerase family. LeuC type 2 subfamily.</text>
</comment>
<organism>
    <name type="scientific">Sulfurihydrogenibium sp. (strain YO3AOP1)</name>
    <dbReference type="NCBI Taxonomy" id="436114"/>
    <lineage>
        <taxon>Bacteria</taxon>
        <taxon>Pseudomonadati</taxon>
        <taxon>Aquificota</taxon>
        <taxon>Aquificia</taxon>
        <taxon>Aquificales</taxon>
        <taxon>Hydrogenothermaceae</taxon>
        <taxon>Sulfurihydrogenibium</taxon>
    </lineage>
</organism>
<feature type="chain" id="PRO_1000135736" description="3-isopropylmalate dehydratase large subunit">
    <location>
        <begin position="1"/>
        <end position="431"/>
    </location>
</feature>
<feature type="binding site" evidence="1">
    <location>
        <position position="300"/>
    </location>
    <ligand>
        <name>[4Fe-4S] cluster</name>
        <dbReference type="ChEBI" id="CHEBI:49883"/>
    </ligand>
</feature>
<feature type="binding site" evidence="1">
    <location>
        <position position="360"/>
    </location>
    <ligand>
        <name>[4Fe-4S] cluster</name>
        <dbReference type="ChEBI" id="CHEBI:49883"/>
    </ligand>
</feature>
<feature type="binding site" evidence="1">
    <location>
        <position position="363"/>
    </location>
    <ligand>
        <name>[4Fe-4S] cluster</name>
        <dbReference type="ChEBI" id="CHEBI:49883"/>
    </ligand>
</feature>
<name>LEUC_SULSY</name>
<evidence type="ECO:0000255" key="1">
    <source>
        <dbReference type="HAMAP-Rule" id="MF_01027"/>
    </source>
</evidence>
<sequence>MGMTITEKIIAAHAGRDYVEPGELVTVKVDLAIANDITAPLAIKQLEKYGIDKVHDPNKIALVMDHFFPPKDIMSAQQIKISRDFAKKMGIKNYFEGQDSGVMHTLLPEKGFVVPGDLVIGADSHTCTYGGIGAFSTGVGSTDIAYIWATGETWLRVPESMKFVFYNKPQKWVGGKDFVLTVIGKIGVDGALYKAMEYQGEAIRALDIDNRLTIANMAIEAGGKSGIIEPDEKTVDWVRKRTNREFKLYKSDPDAKYCCEYEFDASKIEPVVACPSLPSNVKPVSEVAGTHIDQVFIGSCTNGRLSDLRIAAAILKSKKVHPEVRCIVIPASDQIYKQALHEGIIEILADAGCLISTSTCGPCLGGHMGILAEGEVCLSTSNRNFVGRMGHPKSQVYLSSPAVAAASAVLGRIAHPDEVAKYEEVETLITL</sequence>
<accession>B2V844</accession>
<protein>
    <recommendedName>
        <fullName evidence="1">3-isopropylmalate dehydratase large subunit</fullName>
        <ecNumber evidence="1">4.2.1.33</ecNumber>
    </recommendedName>
    <alternativeName>
        <fullName evidence="1">Alpha-IPM isomerase</fullName>
        <shortName evidence="1">IPMI</shortName>
    </alternativeName>
    <alternativeName>
        <fullName evidence="1">Isopropylmalate isomerase</fullName>
    </alternativeName>
</protein>
<keyword id="KW-0004">4Fe-4S</keyword>
<keyword id="KW-0028">Amino-acid biosynthesis</keyword>
<keyword id="KW-0100">Branched-chain amino acid biosynthesis</keyword>
<keyword id="KW-0408">Iron</keyword>
<keyword id="KW-0411">Iron-sulfur</keyword>
<keyword id="KW-0432">Leucine biosynthesis</keyword>
<keyword id="KW-0456">Lyase</keyword>
<keyword id="KW-0479">Metal-binding</keyword>
<dbReference type="EC" id="4.2.1.33" evidence="1"/>
<dbReference type="EMBL" id="CP001080">
    <property type="protein sequence ID" value="ACD66117.1"/>
    <property type="molecule type" value="Genomic_DNA"/>
</dbReference>
<dbReference type="RefSeq" id="WP_012459198.1">
    <property type="nucleotide sequence ID" value="NC_010730.1"/>
</dbReference>
<dbReference type="SMR" id="B2V844"/>
<dbReference type="STRING" id="436114.SYO3AOP1_0476"/>
<dbReference type="KEGG" id="sul:SYO3AOP1_0476"/>
<dbReference type="eggNOG" id="COG0065">
    <property type="taxonomic scope" value="Bacteria"/>
</dbReference>
<dbReference type="HOGENOM" id="CLU_006714_3_4_0"/>
<dbReference type="UniPathway" id="UPA00048">
    <property type="reaction ID" value="UER00071"/>
</dbReference>
<dbReference type="GO" id="GO:0003861">
    <property type="term" value="F:3-isopropylmalate dehydratase activity"/>
    <property type="evidence" value="ECO:0007669"/>
    <property type="project" value="UniProtKB-UniRule"/>
</dbReference>
<dbReference type="GO" id="GO:0051539">
    <property type="term" value="F:4 iron, 4 sulfur cluster binding"/>
    <property type="evidence" value="ECO:0007669"/>
    <property type="project" value="UniProtKB-KW"/>
</dbReference>
<dbReference type="GO" id="GO:0046872">
    <property type="term" value="F:metal ion binding"/>
    <property type="evidence" value="ECO:0007669"/>
    <property type="project" value="UniProtKB-KW"/>
</dbReference>
<dbReference type="GO" id="GO:0009098">
    <property type="term" value="P:L-leucine biosynthetic process"/>
    <property type="evidence" value="ECO:0007669"/>
    <property type="project" value="UniProtKB-UniRule"/>
</dbReference>
<dbReference type="CDD" id="cd01583">
    <property type="entry name" value="IPMI"/>
    <property type="match status" value="1"/>
</dbReference>
<dbReference type="Gene3D" id="3.30.499.10">
    <property type="entry name" value="Aconitase, domain 3"/>
    <property type="match status" value="2"/>
</dbReference>
<dbReference type="HAMAP" id="MF_01027">
    <property type="entry name" value="LeuC_type2"/>
    <property type="match status" value="1"/>
</dbReference>
<dbReference type="InterPro" id="IPR015931">
    <property type="entry name" value="Acnase/IPM_dHydase_lsu_aba_1/3"/>
</dbReference>
<dbReference type="InterPro" id="IPR001030">
    <property type="entry name" value="Acoase/IPM_deHydtase_lsu_aba"/>
</dbReference>
<dbReference type="InterPro" id="IPR018136">
    <property type="entry name" value="Aconitase_4Fe-4S_BS"/>
</dbReference>
<dbReference type="InterPro" id="IPR036008">
    <property type="entry name" value="Aconitase_4Fe-4S_dom"/>
</dbReference>
<dbReference type="InterPro" id="IPR011826">
    <property type="entry name" value="HAcnase/IPMdehydase_lsu_prok"/>
</dbReference>
<dbReference type="InterPro" id="IPR006251">
    <property type="entry name" value="Homoacnase/IPMdehydase_lsu"/>
</dbReference>
<dbReference type="InterPro" id="IPR050067">
    <property type="entry name" value="IPM_dehydratase_rel_enz"/>
</dbReference>
<dbReference type="InterPro" id="IPR033941">
    <property type="entry name" value="IPMI_cat"/>
</dbReference>
<dbReference type="InterPro" id="IPR011823">
    <property type="entry name" value="IsopropMal_deHydtase_lsu_bac"/>
</dbReference>
<dbReference type="NCBIfam" id="TIGR01343">
    <property type="entry name" value="hacA_fam"/>
    <property type="match status" value="1"/>
</dbReference>
<dbReference type="NCBIfam" id="TIGR02086">
    <property type="entry name" value="IPMI_arch"/>
    <property type="match status" value="1"/>
</dbReference>
<dbReference type="NCBIfam" id="TIGR02083">
    <property type="entry name" value="LEU2"/>
    <property type="match status" value="1"/>
</dbReference>
<dbReference type="NCBIfam" id="NF001614">
    <property type="entry name" value="PRK00402.1"/>
    <property type="match status" value="1"/>
</dbReference>
<dbReference type="PANTHER" id="PTHR43822:SF16">
    <property type="entry name" value="3-ISOPROPYLMALATE DEHYDRATASE LARGE SUBUNIT 2"/>
    <property type="match status" value="1"/>
</dbReference>
<dbReference type="PANTHER" id="PTHR43822">
    <property type="entry name" value="HOMOACONITASE, MITOCHONDRIAL-RELATED"/>
    <property type="match status" value="1"/>
</dbReference>
<dbReference type="Pfam" id="PF00330">
    <property type="entry name" value="Aconitase"/>
    <property type="match status" value="2"/>
</dbReference>
<dbReference type="PRINTS" id="PR00415">
    <property type="entry name" value="ACONITASE"/>
</dbReference>
<dbReference type="SUPFAM" id="SSF53732">
    <property type="entry name" value="Aconitase iron-sulfur domain"/>
    <property type="match status" value="1"/>
</dbReference>
<dbReference type="PROSITE" id="PS00450">
    <property type="entry name" value="ACONITASE_1"/>
    <property type="match status" value="1"/>
</dbReference>
<dbReference type="PROSITE" id="PS01244">
    <property type="entry name" value="ACONITASE_2"/>
    <property type="match status" value="1"/>
</dbReference>
<proteinExistence type="inferred from homology"/>
<gene>
    <name evidence="1" type="primary">leuC</name>
    <name type="ordered locus">SYO3AOP1_0476</name>
</gene>